<reference key="1">
    <citation type="journal article" date="1995" name="Science">
        <title>Whole-genome random sequencing and assembly of Haemophilus influenzae Rd.</title>
        <authorList>
            <person name="Fleischmann R.D."/>
            <person name="Adams M.D."/>
            <person name="White O."/>
            <person name="Clayton R.A."/>
            <person name="Kirkness E.F."/>
            <person name="Kerlavage A.R."/>
            <person name="Bult C.J."/>
            <person name="Tomb J.-F."/>
            <person name="Dougherty B.A."/>
            <person name="Merrick J.M."/>
            <person name="McKenney K."/>
            <person name="Sutton G.G."/>
            <person name="FitzHugh W."/>
            <person name="Fields C.A."/>
            <person name="Gocayne J.D."/>
            <person name="Scott J.D."/>
            <person name="Shirley R."/>
            <person name="Liu L.-I."/>
            <person name="Glodek A."/>
            <person name="Kelley J.M."/>
            <person name="Weidman J.F."/>
            <person name="Phillips C.A."/>
            <person name="Spriggs T."/>
            <person name="Hedblom E."/>
            <person name="Cotton M.D."/>
            <person name="Utterback T.R."/>
            <person name="Hanna M.C."/>
            <person name="Nguyen D.T."/>
            <person name="Saudek D.M."/>
            <person name="Brandon R.C."/>
            <person name="Fine L.D."/>
            <person name="Fritchman J.L."/>
            <person name="Fuhrmann J.L."/>
            <person name="Geoghagen N.S.M."/>
            <person name="Gnehm C.L."/>
            <person name="McDonald L.A."/>
            <person name="Small K.V."/>
            <person name="Fraser C.M."/>
            <person name="Smith H.O."/>
            <person name="Venter J.C."/>
        </authorList>
    </citation>
    <scope>NUCLEOTIDE SEQUENCE [LARGE SCALE GENOMIC DNA]</scope>
    <source>
        <strain>ATCC 51907 / DSM 11121 / KW20 / Rd</strain>
    </source>
</reference>
<comment type="function">
    <text evidence="1">Catalyzes the reduction of the glycolytic intermediate dihydroxyacetone phosphate (DHAP) to sn-glycerol 3-phosphate (G3P), the key precursor for phospholipid synthesis.</text>
</comment>
<comment type="catalytic activity">
    <reaction evidence="1">
        <text>sn-glycerol 3-phosphate + NAD(+) = dihydroxyacetone phosphate + NADH + H(+)</text>
        <dbReference type="Rhea" id="RHEA:11092"/>
        <dbReference type="ChEBI" id="CHEBI:15378"/>
        <dbReference type="ChEBI" id="CHEBI:57540"/>
        <dbReference type="ChEBI" id="CHEBI:57597"/>
        <dbReference type="ChEBI" id="CHEBI:57642"/>
        <dbReference type="ChEBI" id="CHEBI:57945"/>
        <dbReference type="EC" id="1.1.1.94"/>
    </reaction>
    <physiologicalReaction direction="right-to-left" evidence="1">
        <dbReference type="Rhea" id="RHEA:11094"/>
    </physiologicalReaction>
</comment>
<comment type="catalytic activity">
    <reaction evidence="1">
        <text>sn-glycerol 3-phosphate + NADP(+) = dihydroxyacetone phosphate + NADPH + H(+)</text>
        <dbReference type="Rhea" id="RHEA:11096"/>
        <dbReference type="ChEBI" id="CHEBI:15378"/>
        <dbReference type="ChEBI" id="CHEBI:57597"/>
        <dbReference type="ChEBI" id="CHEBI:57642"/>
        <dbReference type="ChEBI" id="CHEBI:57783"/>
        <dbReference type="ChEBI" id="CHEBI:58349"/>
        <dbReference type="EC" id="1.1.1.94"/>
    </reaction>
    <physiologicalReaction direction="right-to-left" evidence="1">
        <dbReference type="Rhea" id="RHEA:11098"/>
    </physiologicalReaction>
</comment>
<comment type="pathway">
    <text evidence="1">Membrane lipid metabolism; glycerophospholipid metabolism.</text>
</comment>
<comment type="subcellular location">
    <subcellularLocation>
        <location evidence="1">Cytoplasm</location>
    </subcellularLocation>
</comment>
<comment type="similarity">
    <text evidence="1">Belongs to the NAD-dependent glycerol-3-phosphate dehydrogenase family.</text>
</comment>
<gene>
    <name evidence="1" type="primary">gpsA</name>
    <name type="ordered locus">HI_0605</name>
</gene>
<evidence type="ECO:0000255" key="1">
    <source>
        <dbReference type="HAMAP-Rule" id="MF_00394"/>
    </source>
</evidence>
<keyword id="KW-0963">Cytoplasm</keyword>
<keyword id="KW-0444">Lipid biosynthesis</keyword>
<keyword id="KW-0443">Lipid metabolism</keyword>
<keyword id="KW-0520">NAD</keyword>
<keyword id="KW-0521">NADP</keyword>
<keyword id="KW-0547">Nucleotide-binding</keyword>
<keyword id="KW-0560">Oxidoreductase</keyword>
<keyword id="KW-0594">Phospholipid biosynthesis</keyword>
<keyword id="KW-1208">Phospholipid metabolism</keyword>
<keyword id="KW-1185">Reference proteome</keyword>
<protein>
    <recommendedName>
        <fullName evidence="1">Glycerol-3-phosphate dehydrogenase [NAD(P)+]</fullName>
        <ecNumber evidence="1">1.1.1.94</ecNumber>
    </recommendedName>
    <alternativeName>
        <fullName evidence="1">NAD(P)(+)-dependent glycerol-3-phosphate dehydrogenase</fullName>
    </alternativeName>
    <alternativeName>
        <fullName evidence="1">NAD(P)H-dependent dihydroxyacetone-phosphate reductase</fullName>
    </alternativeName>
</protein>
<name>GPDA_HAEIN</name>
<accession>P43798</accession>
<sequence>MITSQTPITVLGAGSYGTALAITFSRNGSPTHLWGHNPAHIAQMQTERQNYRFLPDVIFPEDLHLESNLAQAMEYSQDILIVVPSHAFGEILIKIKPHLKAHHRLIWATKGLERNTGRLLQTVVEEQLGTQYPLAVLSGPTFAKELAQGLPSAITLAANNEQFAREFQSRIHCSKGFRVYINSDMTGVQLGGAIKNVIAIGAGISDGMGFGANARTALITRGIAEITRLGISLGANTNTFMGMSGLGDLVLTCTDNQSRNRRFGLMLGKGLDAQMAMENIGQVVEGFYNTKEAYLLAQRQGVEMPITEQIYQMLFCGKSAQDVAISLLGRACKGE</sequence>
<organism>
    <name type="scientific">Haemophilus influenzae (strain ATCC 51907 / DSM 11121 / KW20 / Rd)</name>
    <dbReference type="NCBI Taxonomy" id="71421"/>
    <lineage>
        <taxon>Bacteria</taxon>
        <taxon>Pseudomonadati</taxon>
        <taxon>Pseudomonadota</taxon>
        <taxon>Gammaproteobacteria</taxon>
        <taxon>Pasteurellales</taxon>
        <taxon>Pasteurellaceae</taxon>
        <taxon>Haemophilus</taxon>
    </lineage>
</organism>
<dbReference type="EC" id="1.1.1.94" evidence="1"/>
<dbReference type="EMBL" id="L42023">
    <property type="protein sequence ID" value="AAC22264.1"/>
    <property type="molecule type" value="Genomic_DNA"/>
</dbReference>
<dbReference type="PIR" id="F64080">
    <property type="entry name" value="F64080"/>
</dbReference>
<dbReference type="RefSeq" id="NP_438763.1">
    <property type="nucleotide sequence ID" value="NC_000907.1"/>
</dbReference>
<dbReference type="SMR" id="P43798"/>
<dbReference type="STRING" id="71421.HI_0605"/>
<dbReference type="EnsemblBacteria" id="AAC22264">
    <property type="protein sequence ID" value="AAC22264"/>
    <property type="gene ID" value="HI_0605"/>
</dbReference>
<dbReference type="KEGG" id="hin:HI_0605"/>
<dbReference type="PATRIC" id="fig|71421.8.peg.629"/>
<dbReference type="eggNOG" id="COG0240">
    <property type="taxonomic scope" value="Bacteria"/>
</dbReference>
<dbReference type="HOGENOM" id="CLU_033449_0_2_6"/>
<dbReference type="OrthoDB" id="9812273at2"/>
<dbReference type="PhylomeDB" id="P43798"/>
<dbReference type="BioCyc" id="HINF71421:G1GJ1-624-MONOMER"/>
<dbReference type="UniPathway" id="UPA00940"/>
<dbReference type="Proteomes" id="UP000000579">
    <property type="component" value="Chromosome"/>
</dbReference>
<dbReference type="GO" id="GO:0005829">
    <property type="term" value="C:cytosol"/>
    <property type="evidence" value="ECO:0000318"/>
    <property type="project" value="GO_Central"/>
</dbReference>
<dbReference type="GO" id="GO:0047952">
    <property type="term" value="F:glycerol-3-phosphate dehydrogenase [NAD(P)+] activity"/>
    <property type="evidence" value="ECO:0000318"/>
    <property type="project" value="GO_Central"/>
</dbReference>
<dbReference type="GO" id="GO:0051287">
    <property type="term" value="F:NAD binding"/>
    <property type="evidence" value="ECO:0007669"/>
    <property type="project" value="InterPro"/>
</dbReference>
<dbReference type="GO" id="GO:0005975">
    <property type="term" value="P:carbohydrate metabolic process"/>
    <property type="evidence" value="ECO:0007669"/>
    <property type="project" value="InterPro"/>
</dbReference>
<dbReference type="GO" id="GO:0046167">
    <property type="term" value="P:glycerol-3-phosphate biosynthetic process"/>
    <property type="evidence" value="ECO:0007669"/>
    <property type="project" value="UniProtKB-UniRule"/>
</dbReference>
<dbReference type="GO" id="GO:0046168">
    <property type="term" value="P:glycerol-3-phosphate catabolic process"/>
    <property type="evidence" value="ECO:0007669"/>
    <property type="project" value="InterPro"/>
</dbReference>
<dbReference type="GO" id="GO:0006072">
    <property type="term" value="P:glycerol-3-phosphate metabolic process"/>
    <property type="evidence" value="ECO:0000318"/>
    <property type="project" value="GO_Central"/>
</dbReference>
<dbReference type="GO" id="GO:0046474">
    <property type="term" value="P:glycerophospholipid biosynthetic process"/>
    <property type="evidence" value="ECO:0000318"/>
    <property type="project" value="GO_Central"/>
</dbReference>
<dbReference type="FunFam" id="1.10.1040.10:FF:000001">
    <property type="entry name" value="Glycerol-3-phosphate dehydrogenase [NAD(P)+]"/>
    <property type="match status" value="1"/>
</dbReference>
<dbReference type="FunFam" id="3.40.50.720:FF:000019">
    <property type="entry name" value="Glycerol-3-phosphate dehydrogenase [NAD(P)+]"/>
    <property type="match status" value="1"/>
</dbReference>
<dbReference type="Gene3D" id="1.10.1040.10">
    <property type="entry name" value="N-(1-d-carboxylethyl)-l-norvaline Dehydrogenase, domain 2"/>
    <property type="match status" value="1"/>
</dbReference>
<dbReference type="Gene3D" id="3.40.50.720">
    <property type="entry name" value="NAD(P)-binding Rossmann-like Domain"/>
    <property type="match status" value="1"/>
</dbReference>
<dbReference type="HAMAP" id="MF_00394">
    <property type="entry name" value="NAD_Glyc3P_dehydrog"/>
    <property type="match status" value="1"/>
</dbReference>
<dbReference type="InterPro" id="IPR008927">
    <property type="entry name" value="6-PGluconate_DH-like_C_sf"/>
</dbReference>
<dbReference type="InterPro" id="IPR013328">
    <property type="entry name" value="6PGD_dom2"/>
</dbReference>
<dbReference type="InterPro" id="IPR006168">
    <property type="entry name" value="G3P_DH_NAD-dep"/>
</dbReference>
<dbReference type="InterPro" id="IPR006109">
    <property type="entry name" value="G3P_DH_NAD-dep_C"/>
</dbReference>
<dbReference type="InterPro" id="IPR011128">
    <property type="entry name" value="G3P_DH_NAD-dep_N"/>
</dbReference>
<dbReference type="InterPro" id="IPR036291">
    <property type="entry name" value="NAD(P)-bd_dom_sf"/>
</dbReference>
<dbReference type="NCBIfam" id="NF000939">
    <property type="entry name" value="PRK00094.1-1"/>
    <property type="match status" value="1"/>
</dbReference>
<dbReference type="NCBIfam" id="NF000940">
    <property type="entry name" value="PRK00094.1-2"/>
    <property type="match status" value="1"/>
</dbReference>
<dbReference type="NCBIfam" id="NF000942">
    <property type="entry name" value="PRK00094.1-4"/>
    <property type="match status" value="1"/>
</dbReference>
<dbReference type="PANTHER" id="PTHR11728">
    <property type="entry name" value="GLYCEROL-3-PHOSPHATE DEHYDROGENASE"/>
    <property type="match status" value="1"/>
</dbReference>
<dbReference type="PANTHER" id="PTHR11728:SF1">
    <property type="entry name" value="GLYCEROL-3-PHOSPHATE DEHYDROGENASE [NAD(+)] 2, CHLOROPLASTIC"/>
    <property type="match status" value="1"/>
</dbReference>
<dbReference type="Pfam" id="PF07479">
    <property type="entry name" value="NAD_Gly3P_dh_C"/>
    <property type="match status" value="1"/>
</dbReference>
<dbReference type="Pfam" id="PF01210">
    <property type="entry name" value="NAD_Gly3P_dh_N"/>
    <property type="match status" value="1"/>
</dbReference>
<dbReference type="PIRSF" id="PIRSF000114">
    <property type="entry name" value="Glycerol-3-P_dh"/>
    <property type="match status" value="1"/>
</dbReference>
<dbReference type="PRINTS" id="PR00077">
    <property type="entry name" value="GPDHDRGNASE"/>
</dbReference>
<dbReference type="SUPFAM" id="SSF48179">
    <property type="entry name" value="6-phosphogluconate dehydrogenase C-terminal domain-like"/>
    <property type="match status" value="1"/>
</dbReference>
<dbReference type="SUPFAM" id="SSF51735">
    <property type="entry name" value="NAD(P)-binding Rossmann-fold domains"/>
    <property type="match status" value="1"/>
</dbReference>
<dbReference type="PROSITE" id="PS00957">
    <property type="entry name" value="NAD_G3PDH"/>
    <property type="match status" value="1"/>
</dbReference>
<proteinExistence type="inferred from homology"/>
<feature type="chain" id="PRO_0000137969" description="Glycerol-3-phosphate dehydrogenase [NAD(P)+]">
    <location>
        <begin position="1"/>
        <end position="335"/>
    </location>
</feature>
<feature type="active site" description="Proton acceptor" evidence="1">
    <location>
        <position position="195"/>
    </location>
</feature>
<feature type="binding site" evidence="1">
    <location>
        <position position="15"/>
    </location>
    <ligand>
        <name>NADPH</name>
        <dbReference type="ChEBI" id="CHEBI:57783"/>
    </ligand>
</feature>
<feature type="binding site" evidence="1">
    <location>
        <position position="16"/>
    </location>
    <ligand>
        <name>NADPH</name>
        <dbReference type="ChEBI" id="CHEBI:57783"/>
    </ligand>
</feature>
<feature type="binding site" evidence="1">
    <location>
        <position position="36"/>
    </location>
    <ligand>
        <name>NADPH</name>
        <dbReference type="ChEBI" id="CHEBI:57783"/>
    </ligand>
</feature>
<feature type="binding site" evidence="1">
    <location>
        <position position="110"/>
    </location>
    <ligand>
        <name>NADPH</name>
        <dbReference type="ChEBI" id="CHEBI:57783"/>
    </ligand>
</feature>
<feature type="binding site" evidence="1">
    <location>
        <position position="110"/>
    </location>
    <ligand>
        <name>sn-glycerol 3-phosphate</name>
        <dbReference type="ChEBI" id="CHEBI:57597"/>
    </ligand>
</feature>
<feature type="binding site" evidence="1">
    <location>
        <position position="139"/>
    </location>
    <ligand>
        <name>sn-glycerol 3-phosphate</name>
        <dbReference type="ChEBI" id="CHEBI:57597"/>
    </ligand>
</feature>
<feature type="binding site" evidence="1">
    <location>
        <position position="141"/>
    </location>
    <ligand>
        <name>sn-glycerol 3-phosphate</name>
        <dbReference type="ChEBI" id="CHEBI:57597"/>
    </ligand>
</feature>
<feature type="binding site" evidence="1">
    <location>
        <position position="143"/>
    </location>
    <ligand>
        <name>NADPH</name>
        <dbReference type="ChEBI" id="CHEBI:57783"/>
    </ligand>
</feature>
<feature type="binding site" evidence="1">
    <location>
        <position position="195"/>
    </location>
    <ligand>
        <name>sn-glycerol 3-phosphate</name>
        <dbReference type="ChEBI" id="CHEBI:57597"/>
    </ligand>
</feature>
<feature type="binding site" evidence="1">
    <location>
        <position position="248"/>
    </location>
    <ligand>
        <name>sn-glycerol 3-phosphate</name>
        <dbReference type="ChEBI" id="CHEBI:57597"/>
    </ligand>
</feature>
<feature type="binding site" evidence="1">
    <location>
        <position position="258"/>
    </location>
    <ligand>
        <name>sn-glycerol 3-phosphate</name>
        <dbReference type="ChEBI" id="CHEBI:57597"/>
    </ligand>
</feature>
<feature type="binding site" evidence="1">
    <location>
        <position position="259"/>
    </location>
    <ligand>
        <name>NADPH</name>
        <dbReference type="ChEBI" id="CHEBI:57783"/>
    </ligand>
</feature>
<feature type="binding site" evidence="1">
    <location>
        <position position="259"/>
    </location>
    <ligand>
        <name>sn-glycerol 3-phosphate</name>
        <dbReference type="ChEBI" id="CHEBI:57597"/>
    </ligand>
</feature>
<feature type="binding site" evidence="1">
    <location>
        <position position="260"/>
    </location>
    <ligand>
        <name>sn-glycerol 3-phosphate</name>
        <dbReference type="ChEBI" id="CHEBI:57597"/>
    </ligand>
</feature>
<feature type="binding site" evidence="1">
    <location>
        <position position="283"/>
    </location>
    <ligand>
        <name>NADPH</name>
        <dbReference type="ChEBI" id="CHEBI:57783"/>
    </ligand>
</feature>
<feature type="binding site" evidence="1">
    <location>
        <position position="285"/>
    </location>
    <ligand>
        <name>NADPH</name>
        <dbReference type="ChEBI" id="CHEBI:57783"/>
    </ligand>
</feature>